<protein>
    <recommendedName>
        <fullName>Cardio acceleratory peptide 2b</fullName>
    </recommendedName>
    <alternativeName>
        <fullName>Capability protein</fullName>
    </alternativeName>
    <alternativeName>
        <fullName>Myotropin-CAP2b-like protein</fullName>
    </alternativeName>
    <component>
        <recommendedName>
            <fullName>CAP-1</fullName>
        </recommendedName>
    </component>
    <component>
        <recommendedName>
            <fullName>CAP-2</fullName>
        </recommendedName>
    </component>
    <component>
        <recommendedName>
            <fullName>CAP-3</fullName>
        </recommendedName>
        <alternativeName>
            <fullName>Pyrokinin-1</fullName>
        </alternativeName>
    </component>
</protein>
<dbReference type="EMBL" id="CM000070">
    <property type="protein sequence ID" value="EAL26746.2"/>
    <property type="molecule type" value="Genomic_DNA"/>
</dbReference>
<dbReference type="RefSeq" id="XP_001357612.2">
    <property type="nucleotide sequence ID" value="XM_001357575.3"/>
</dbReference>
<dbReference type="FunCoup" id="Q29CA0">
    <property type="interactions" value="114"/>
</dbReference>
<dbReference type="STRING" id="46245.Q29CA0"/>
<dbReference type="EnsemblMetazoa" id="FBtr0284510">
    <property type="protein sequence ID" value="FBpp0282948"/>
    <property type="gene ID" value="FBgn0073815"/>
</dbReference>
<dbReference type="GeneID" id="4800261"/>
<dbReference type="KEGG" id="dpo:4800261"/>
<dbReference type="CTD" id="43541"/>
<dbReference type="eggNOG" id="ENOG502TAG0">
    <property type="taxonomic scope" value="Eukaryota"/>
</dbReference>
<dbReference type="HOGENOM" id="CLU_1697372_0_0_1"/>
<dbReference type="InParanoid" id="Q29CA0"/>
<dbReference type="OMA" id="SMLVHIV"/>
<dbReference type="Proteomes" id="UP000001819">
    <property type="component" value="Chromosome 2"/>
</dbReference>
<dbReference type="Bgee" id="FBgn0073815">
    <property type="expression patterns" value="Expressed in insect adult head"/>
</dbReference>
<dbReference type="GO" id="GO:0005576">
    <property type="term" value="C:extracellular region"/>
    <property type="evidence" value="ECO:0000250"/>
    <property type="project" value="UniProtKB"/>
</dbReference>
<dbReference type="GO" id="GO:0016084">
    <property type="term" value="F:myostimulatory hormone activity"/>
    <property type="evidence" value="ECO:0000250"/>
    <property type="project" value="UniProtKB"/>
</dbReference>
<dbReference type="GO" id="GO:0005184">
    <property type="term" value="F:neuropeptide hormone activity"/>
    <property type="evidence" value="ECO:0000250"/>
    <property type="project" value="UniProtKB"/>
</dbReference>
<dbReference type="GO" id="GO:0007218">
    <property type="term" value="P:neuropeptide signaling pathway"/>
    <property type="evidence" value="ECO:0000250"/>
    <property type="project" value="UniProtKB"/>
</dbReference>
<dbReference type="InterPro" id="IPR013231">
    <property type="entry name" value="Periviscerokinin"/>
</dbReference>
<dbReference type="Pfam" id="PF08259">
    <property type="entry name" value="Periviscerokin"/>
    <property type="match status" value="1"/>
</dbReference>
<dbReference type="PROSITE" id="PS00539">
    <property type="entry name" value="PYROKININ"/>
    <property type="match status" value="1"/>
</dbReference>
<name>CP2B_DROPS</name>
<organism>
    <name type="scientific">Drosophila pseudoobscura pseudoobscura</name>
    <name type="common">Fruit fly</name>
    <dbReference type="NCBI Taxonomy" id="46245"/>
    <lineage>
        <taxon>Eukaryota</taxon>
        <taxon>Metazoa</taxon>
        <taxon>Ecdysozoa</taxon>
        <taxon>Arthropoda</taxon>
        <taxon>Hexapoda</taxon>
        <taxon>Insecta</taxon>
        <taxon>Pterygota</taxon>
        <taxon>Neoptera</taxon>
        <taxon>Endopterygota</taxon>
        <taxon>Diptera</taxon>
        <taxon>Brachycera</taxon>
        <taxon>Muscomorpha</taxon>
        <taxon>Ephydroidea</taxon>
        <taxon>Drosophilidae</taxon>
        <taxon>Drosophila</taxon>
        <taxon>Sophophora</taxon>
    </lineage>
</organism>
<evidence type="ECO:0000250" key="1">
    <source>
        <dbReference type="UniProtKB" id="Q9NIP6"/>
    </source>
</evidence>
<evidence type="ECO:0000255" key="2"/>
<reference key="1">
    <citation type="journal article" date="2005" name="Genome Res.">
        <title>Comparative genome sequencing of Drosophila pseudoobscura: chromosomal, gene, and cis-element evolution.</title>
        <authorList>
            <person name="Richards S."/>
            <person name="Liu Y."/>
            <person name="Bettencourt B.R."/>
            <person name="Hradecky P."/>
            <person name="Letovsky S."/>
            <person name="Nielsen R."/>
            <person name="Thornton K."/>
            <person name="Hubisz M.J."/>
            <person name="Chen R."/>
            <person name="Meisel R.P."/>
            <person name="Couronne O."/>
            <person name="Hua S."/>
            <person name="Smith M.A."/>
            <person name="Zhang P."/>
            <person name="Liu J."/>
            <person name="Bussemaker H.J."/>
            <person name="van Batenburg M.F."/>
            <person name="Howells S.L."/>
            <person name="Scherer S.E."/>
            <person name="Sodergren E."/>
            <person name="Matthews B.B."/>
            <person name="Crosby M.A."/>
            <person name="Schroeder A.J."/>
            <person name="Ortiz-Barrientos D."/>
            <person name="Rives C.M."/>
            <person name="Metzker M.L."/>
            <person name="Muzny D.M."/>
            <person name="Scott G."/>
            <person name="Steffen D."/>
            <person name="Wheeler D.A."/>
            <person name="Worley K.C."/>
            <person name="Havlak P."/>
            <person name="Durbin K.J."/>
            <person name="Egan A."/>
            <person name="Gill R."/>
            <person name="Hume J."/>
            <person name="Morgan M.B."/>
            <person name="Miner G."/>
            <person name="Hamilton C."/>
            <person name="Huang Y."/>
            <person name="Waldron L."/>
            <person name="Verduzco D."/>
            <person name="Clerc-Blankenburg K.P."/>
            <person name="Dubchak I."/>
            <person name="Noor M.A.F."/>
            <person name="Anderson W."/>
            <person name="White K.P."/>
            <person name="Clark A.G."/>
            <person name="Schaeffer S.W."/>
            <person name="Gelbart W.M."/>
            <person name="Weinstock G.M."/>
            <person name="Gibbs R.A."/>
        </authorList>
    </citation>
    <scope>NUCLEOTIDE SEQUENCE [LARGE SCALE GENOMIC DNA]</scope>
    <source>
        <strain>MV2-25 / Tucson 14011-0121.94</strain>
    </source>
</reference>
<sequence length="155" mass="16958">MKAIFSLYNIVSAILLLVLLAEFSTAELNHDKNRRGANMGLYAFPRVGRSDPSLANSLRDASDAAVFDGLYGDASQEDYNEADYQKRAGLVAFPRVGRSDAELRKFAHLLALQQVLDKRTGPSASSGLWFGPRLGKRSVDAKAFSDASKGQQEFN</sequence>
<accession>Q29CA0</accession>
<comment type="function">
    <text evidence="1">CAP-1 and CAP-2, but not CAP-3 are ligands for the Capa receptor. CAP-1 and CAP-2 are probably components of the signal transduction pathway that leads to Malpighian tubule fluid secretion via the second messenger nitric oxide (By similarity).</text>
</comment>
<comment type="subcellular location">
    <subcellularLocation>
        <location evidence="1">Secreted</location>
    </subcellularLocation>
</comment>
<comment type="similarity">
    <text evidence="2">Belongs to the pyrokinin family.</text>
</comment>
<keyword id="KW-0027">Amidation</keyword>
<keyword id="KW-0165">Cleavage on pair of basic residues</keyword>
<keyword id="KW-0527">Neuropeptide</keyword>
<keyword id="KW-1185">Reference proteome</keyword>
<keyword id="KW-0964">Secreted</keyword>
<keyword id="KW-0732">Signal</keyword>
<feature type="signal peptide" evidence="2">
    <location>
        <begin position="1"/>
        <end position="26"/>
    </location>
</feature>
<feature type="propeptide" id="PRO_0000339244" evidence="1">
    <location>
        <begin position="27"/>
        <end position="33"/>
    </location>
</feature>
<feature type="peptide" id="PRO_0000339245" description="CAP-1" evidence="1">
    <location>
        <begin position="36"/>
        <end position="47"/>
    </location>
</feature>
<feature type="propeptide" id="PRO_0000339246" evidence="1">
    <location>
        <begin position="50"/>
        <end position="85"/>
    </location>
</feature>
<feature type="peptide" id="PRO_0000339247" description="CAP-2" evidence="1">
    <location>
        <begin position="88"/>
        <end position="96"/>
    </location>
</feature>
<feature type="propeptide" id="PRO_0000339248" evidence="1">
    <location>
        <begin position="99"/>
        <end position="117"/>
    </location>
</feature>
<feature type="peptide" id="PRO_0000339249" description="CAP-3" evidence="1">
    <location>
        <begin position="120"/>
        <end position="134"/>
    </location>
</feature>
<feature type="propeptide" id="PRO_0000339250" evidence="1">
    <location>
        <begin position="138"/>
        <end position="155"/>
    </location>
</feature>
<feature type="modified residue" description="Valine amide" evidence="1">
    <location>
        <position position="47"/>
    </location>
</feature>
<feature type="modified residue" description="Valine amide" evidence="1">
    <location>
        <position position="96"/>
    </location>
</feature>
<feature type="modified residue" description="Leucine amide" evidence="1">
    <location>
        <position position="134"/>
    </location>
</feature>
<proteinExistence type="inferred from homology"/>
<gene>
    <name evidence="1" type="primary">capa</name>
    <name type="ORF">GA13779</name>
</gene>